<comment type="function">
    <text evidence="1">Involved in lipopolysaccharide (LPS) biosynthesis. Translocates lipid A-core from the inner to the outer leaflet of the inner membrane. Transmembrane domains (TMD) form a pore in the inner membrane and the ATP-binding domain (NBD) is responsible for energy generation.</text>
</comment>
<comment type="catalytic activity">
    <reaction evidence="1">
        <text>ATP + H2O + lipid A-core oligosaccharideSide 1 = ADP + phosphate + lipid A-core oligosaccharideSide 2.</text>
        <dbReference type="EC" id="7.5.2.6"/>
    </reaction>
</comment>
<comment type="subunit">
    <text evidence="1">Homodimer.</text>
</comment>
<comment type="subcellular location">
    <subcellularLocation>
        <location evidence="1">Cell inner membrane</location>
        <topology evidence="1">Multi-pass membrane protein</topology>
    </subcellularLocation>
</comment>
<comment type="domain">
    <text evidence="1">In MsbA the ATP-binding domain (NBD) and the transmembrane domain (TMD) are fused.</text>
</comment>
<comment type="similarity">
    <text evidence="1">Belongs to the ABC transporter superfamily. Lipid exporter (TC 3.A.1.106) family.</text>
</comment>
<reference key="1">
    <citation type="journal article" date="2005" name="Jpn. Agric. Res. Q.">
        <title>Genome sequence of Xanthomonas oryzae pv. oryzae suggests contribution of large numbers of effector genes and insertion sequences to its race diversity.</title>
        <authorList>
            <person name="Ochiai H."/>
            <person name="Inoue Y."/>
            <person name="Takeya M."/>
            <person name="Sasaki A."/>
            <person name="Kaku H."/>
        </authorList>
    </citation>
    <scope>NUCLEOTIDE SEQUENCE [LARGE SCALE GENOMIC DNA]</scope>
    <source>
        <strain>MAFF 311018</strain>
    </source>
</reference>
<name>MSBA_XANOM</name>
<accession>Q2P3E7</accession>
<sequence length="589" mass="64108">MTNSTDRPVSVSSWRTYRRLVAFAKPYRLLLVAALIAALIEAAGTTGFLALMKPITDETFIYKNAEVSRWLPVQIILLFVVRGIAGYITDMAMGKSARSIARDLRIKVMAKYLRLPGSRFDSEPVPSMLIRLGSDSDQVAQAAVDAIKVMIQQSLQVIGALALMLWHSWQVTLTILVLAPVLAWVMDKVARRYRRISHSIQESGAHLLQAADQTLSSHQEVKIYGAQQTEMERYGALADRNLRLAMKVESTRGISTATVQMIGAIGLSALLFVAGAQALAGRLTAGDFVVLMTSMLTIIPGLKQLTNVQNMVQRGLASAERLFSVLDSPDEPDQGAVALTRAKGLIEFRDVTARYPGQVNPALADVSFIAQPGTVTAIVGRSGSGKSSLIKLIPRFYDAEAGQILLDGQPVQAYALADLRRQIALVGQQVMLFDGSIAENVAFGEMRSADASQLERAILGANAMEFVAQLPEGLQSHVGAKGGRLSGGQRQRLAIARAMLKDAPILILDEATAALDNESERLVQDALHKLMPDRTTLVIAHRLSTIEHADQVLVMDQGRIVERGTHHELLAQGGLYSHLHGMQFRERQA</sequence>
<organism>
    <name type="scientific">Xanthomonas oryzae pv. oryzae (strain MAFF 311018)</name>
    <dbReference type="NCBI Taxonomy" id="342109"/>
    <lineage>
        <taxon>Bacteria</taxon>
        <taxon>Pseudomonadati</taxon>
        <taxon>Pseudomonadota</taxon>
        <taxon>Gammaproteobacteria</taxon>
        <taxon>Lysobacterales</taxon>
        <taxon>Lysobacteraceae</taxon>
        <taxon>Xanthomonas</taxon>
    </lineage>
</organism>
<dbReference type="EC" id="7.5.2.6" evidence="1"/>
<dbReference type="EMBL" id="AP008229">
    <property type="protein sequence ID" value="BAE68930.1"/>
    <property type="molecule type" value="Genomic_DNA"/>
</dbReference>
<dbReference type="RefSeq" id="WP_011258974.1">
    <property type="nucleotide sequence ID" value="NC_007705.1"/>
</dbReference>
<dbReference type="SMR" id="Q2P3E7"/>
<dbReference type="KEGG" id="xom:XOO2175"/>
<dbReference type="HOGENOM" id="CLU_000604_84_3_6"/>
<dbReference type="GO" id="GO:0005886">
    <property type="term" value="C:plasma membrane"/>
    <property type="evidence" value="ECO:0007669"/>
    <property type="project" value="UniProtKB-SubCell"/>
</dbReference>
<dbReference type="GO" id="GO:0015421">
    <property type="term" value="F:ABC-type oligopeptide transporter activity"/>
    <property type="evidence" value="ECO:0007669"/>
    <property type="project" value="TreeGrafter"/>
</dbReference>
<dbReference type="GO" id="GO:0005524">
    <property type="term" value="F:ATP binding"/>
    <property type="evidence" value="ECO:0007669"/>
    <property type="project" value="UniProtKB-KW"/>
</dbReference>
<dbReference type="GO" id="GO:0016887">
    <property type="term" value="F:ATP hydrolysis activity"/>
    <property type="evidence" value="ECO:0007669"/>
    <property type="project" value="InterPro"/>
</dbReference>
<dbReference type="GO" id="GO:0034040">
    <property type="term" value="F:ATPase-coupled lipid transmembrane transporter activity"/>
    <property type="evidence" value="ECO:0007669"/>
    <property type="project" value="InterPro"/>
</dbReference>
<dbReference type="CDD" id="cd18552">
    <property type="entry name" value="ABC_6TM_MsbA_like"/>
    <property type="match status" value="1"/>
</dbReference>
<dbReference type="FunFam" id="1.20.1560.10:FF:000103">
    <property type="entry name" value="Lipid A export ATP-binding/permease protein MsbA"/>
    <property type="match status" value="1"/>
</dbReference>
<dbReference type="FunFam" id="3.40.50.300:FF:000221">
    <property type="entry name" value="Multidrug ABC transporter ATP-binding protein"/>
    <property type="match status" value="1"/>
</dbReference>
<dbReference type="Gene3D" id="1.20.1560.10">
    <property type="entry name" value="ABC transporter type 1, transmembrane domain"/>
    <property type="match status" value="1"/>
</dbReference>
<dbReference type="Gene3D" id="3.40.50.300">
    <property type="entry name" value="P-loop containing nucleotide triphosphate hydrolases"/>
    <property type="match status" value="1"/>
</dbReference>
<dbReference type="InterPro" id="IPR003593">
    <property type="entry name" value="AAA+_ATPase"/>
</dbReference>
<dbReference type="InterPro" id="IPR011527">
    <property type="entry name" value="ABC1_TM_dom"/>
</dbReference>
<dbReference type="InterPro" id="IPR036640">
    <property type="entry name" value="ABC1_TM_sf"/>
</dbReference>
<dbReference type="InterPro" id="IPR003439">
    <property type="entry name" value="ABC_transporter-like_ATP-bd"/>
</dbReference>
<dbReference type="InterPro" id="IPR017871">
    <property type="entry name" value="ABC_transporter-like_CS"/>
</dbReference>
<dbReference type="InterPro" id="IPR011917">
    <property type="entry name" value="ABC_transpr_lipidA"/>
</dbReference>
<dbReference type="InterPro" id="IPR027417">
    <property type="entry name" value="P-loop_NTPase"/>
</dbReference>
<dbReference type="InterPro" id="IPR039421">
    <property type="entry name" value="Type_1_exporter"/>
</dbReference>
<dbReference type="NCBIfam" id="TIGR02203">
    <property type="entry name" value="MsbA_lipidA"/>
    <property type="match status" value="1"/>
</dbReference>
<dbReference type="PANTHER" id="PTHR43394:SF1">
    <property type="entry name" value="ATP-BINDING CASSETTE SUB-FAMILY B MEMBER 10, MITOCHONDRIAL"/>
    <property type="match status" value="1"/>
</dbReference>
<dbReference type="PANTHER" id="PTHR43394">
    <property type="entry name" value="ATP-DEPENDENT PERMEASE MDL1, MITOCHONDRIAL"/>
    <property type="match status" value="1"/>
</dbReference>
<dbReference type="Pfam" id="PF00664">
    <property type="entry name" value="ABC_membrane"/>
    <property type="match status" value="1"/>
</dbReference>
<dbReference type="Pfam" id="PF00005">
    <property type="entry name" value="ABC_tran"/>
    <property type="match status" value="1"/>
</dbReference>
<dbReference type="SMART" id="SM00382">
    <property type="entry name" value="AAA"/>
    <property type="match status" value="1"/>
</dbReference>
<dbReference type="SUPFAM" id="SSF90123">
    <property type="entry name" value="ABC transporter transmembrane region"/>
    <property type="match status" value="1"/>
</dbReference>
<dbReference type="SUPFAM" id="SSF52540">
    <property type="entry name" value="P-loop containing nucleoside triphosphate hydrolases"/>
    <property type="match status" value="1"/>
</dbReference>
<dbReference type="PROSITE" id="PS50929">
    <property type="entry name" value="ABC_TM1F"/>
    <property type="match status" value="1"/>
</dbReference>
<dbReference type="PROSITE" id="PS00211">
    <property type="entry name" value="ABC_TRANSPORTER_1"/>
    <property type="match status" value="1"/>
</dbReference>
<dbReference type="PROSITE" id="PS50893">
    <property type="entry name" value="ABC_TRANSPORTER_2"/>
    <property type="match status" value="1"/>
</dbReference>
<dbReference type="PROSITE" id="PS51239">
    <property type="entry name" value="MSBA"/>
    <property type="match status" value="1"/>
</dbReference>
<evidence type="ECO:0000255" key="1">
    <source>
        <dbReference type="HAMAP-Rule" id="MF_01703"/>
    </source>
</evidence>
<keyword id="KW-0067">ATP-binding</keyword>
<keyword id="KW-0997">Cell inner membrane</keyword>
<keyword id="KW-1003">Cell membrane</keyword>
<keyword id="KW-0445">Lipid transport</keyword>
<keyword id="KW-0472">Membrane</keyword>
<keyword id="KW-0547">Nucleotide-binding</keyword>
<keyword id="KW-1278">Translocase</keyword>
<keyword id="KW-0812">Transmembrane</keyword>
<keyword id="KW-1133">Transmembrane helix</keyword>
<keyword id="KW-0813">Transport</keyword>
<gene>
    <name evidence="1" type="primary">msbA</name>
    <name type="ordered locus">XOO2175</name>
</gene>
<protein>
    <recommendedName>
        <fullName evidence="1">ATP-dependent lipid A-core flippase</fullName>
        <ecNumber evidence="1">7.5.2.6</ecNumber>
    </recommendedName>
    <alternativeName>
        <fullName evidence="1">Lipid A export ATP-binding/permease protein MsbA</fullName>
    </alternativeName>
</protein>
<proteinExistence type="inferred from homology"/>
<feature type="chain" id="PRO_0000271667" description="ATP-dependent lipid A-core flippase">
    <location>
        <begin position="1"/>
        <end position="589"/>
    </location>
</feature>
<feature type="transmembrane region" description="Helical" evidence="1">
    <location>
        <begin position="29"/>
        <end position="49"/>
    </location>
</feature>
<feature type="transmembrane region" description="Helical" evidence="1">
    <location>
        <begin position="70"/>
        <end position="90"/>
    </location>
</feature>
<feature type="transmembrane region" description="Helical" evidence="1">
    <location>
        <begin position="157"/>
        <end position="177"/>
    </location>
</feature>
<feature type="transmembrane region" description="Helical" evidence="1">
    <location>
        <begin position="261"/>
        <end position="281"/>
    </location>
</feature>
<feature type="transmembrane region" description="Helical" evidence="1">
    <location>
        <begin position="283"/>
        <end position="303"/>
    </location>
</feature>
<feature type="domain" description="ABC transmembrane type-1" evidence="1">
    <location>
        <begin position="32"/>
        <end position="314"/>
    </location>
</feature>
<feature type="domain" description="ABC transporter" evidence="1">
    <location>
        <begin position="346"/>
        <end position="582"/>
    </location>
</feature>
<feature type="binding site" evidence="1">
    <location>
        <begin position="380"/>
        <end position="387"/>
    </location>
    <ligand>
        <name>ATP</name>
        <dbReference type="ChEBI" id="CHEBI:30616"/>
    </ligand>
</feature>